<name>BIOH_EDWI9</name>
<protein>
    <recommendedName>
        <fullName evidence="2">Pimeloyl-[acyl-carrier protein] methyl ester esterase</fullName>
        <ecNumber evidence="2">3.1.1.85</ecNumber>
    </recommendedName>
    <alternativeName>
        <fullName evidence="2">Biotin synthesis protein BioH</fullName>
    </alternativeName>
    <alternativeName>
        <fullName evidence="2">Carboxylesterase BioH</fullName>
    </alternativeName>
</protein>
<organism>
    <name type="scientific">Edwardsiella ictaluri (strain 93-146)</name>
    <dbReference type="NCBI Taxonomy" id="634503"/>
    <lineage>
        <taxon>Bacteria</taxon>
        <taxon>Pseudomonadati</taxon>
        <taxon>Pseudomonadota</taxon>
        <taxon>Gammaproteobacteria</taxon>
        <taxon>Enterobacterales</taxon>
        <taxon>Hafniaceae</taxon>
        <taxon>Edwardsiella</taxon>
    </lineage>
</organism>
<evidence type="ECO:0000255" key="1"/>
<evidence type="ECO:0000255" key="2">
    <source>
        <dbReference type="HAMAP-Rule" id="MF_01260"/>
    </source>
</evidence>
<accession>C5BGT3</accession>
<keyword id="KW-0093">Biotin biosynthesis</keyword>
<keyword id="KW-0963">Cytoplasm</keyword>
<keyword id="KW-0378">Hydrolase</keyword>
<keyword id="KW-0719">Serine esterase</keyword>
<feature type="chain" id="PRO_1000214125" description="Pimeloyl-[acyl-carrier protein] methyl ester esterase">
    <location>
        <begin position="1"/>
        <end position="258"/>
    </location>
</feature>
<feature type="domain" description="AB hydrolase-1" evidence="1">
    <location>
        <begin position="16"/>
        <end position="242"/>
    </location>
</feature>
<feature type="active site" description="Nucleophile" evidence="2">
    <location>
        <position position="82"/>
    </location>
</feature>
<feature type="active site" evidence="2">
    <location>
        <position position="207"/>
    </location>
</feature>
<feature type="active site" evidence="2">
    <location>
        <position position="235"/>
    </location>
</feature>
<feature type="binding site" evidence="2">
    <location>
        <position position="22"/>
    </location>
    <ligand>
        <name>substrate</name>
    </ligand>
</feature>
<feature type="binding site" evidence="2">
    <location>
        <begin position="82"/>
        <end position="83"/>
    </location>
    <ligand>
        <name>substrate</name>
    </ligand>
</feature>
<feature type="binding site" evidence="2">
    <location>
        <begin position="143"/>
        <end position="147"/>
    </location>
    <ligand>
        <name>substrate</name>
    </ligand>
</feature>
<feature type="binding site" evidence="2">
    <location>
        <position position="235"/>
    </location>
    <ligand>
        <name>substrate</name>
    </ligand>
</feature>
<dbReference type="EC" id="3.1.1.85" evidence="2"/>
<dbReference type="EMBL" id="CP001600">
    <property type="protein sequence ID" value="ACR70780.1"/>
    <property type="molecule type" value="Genomic_DNA"/>
</dbReference>
<dbReference type="RefSeq" id="WP_015872820.1">
    <property type="nucleotide sequence ID" value="NZ_CP169062.1"/>
</dbReference>
<dbReference type="SMR" id="C5BGT3"/>
<dbReference type="STRING" id="67780.B6E78_09910"/>
<dbReference type="ESTHER" id="edwi9-bioh">
    <property type="family name" value="BioH"/>
</dbReference>
<dbReference type="GeneID" id="69540492"/>
<dbReference type="KEGG" id="eic:NT01EI_3652"/>
<dbReference type="PATRIC" id="fig|634503.3.peg.3256"/>
<dbReference type="HOGENOM" id="CLU_020336_12_2_6"/>
<dbReference type="OrthoDB" id="9780744at2"/>
<dbReference type="UniPathway" id="UPA00078"/>
<dbReference type="Proteomes" id="UP000001485">
    <property type="component" value="Chromosome"/>
</dbReference>
<dbReference type="GO" id="GO:0005737">
    <property type="term" value="C:cytoplasm"/>
    <property type="evidence" value="ECO:0007669"/>
    <property type="project" value="UniProtKB-SubCell"/>
</dbReference>
<dbReference type="GO" id="GO:0016020">
    <property type="term" value="C:membrane"/>
    <property type="evidence" value="ECO:0007669"/>
    <property type="project" value="TreeGrafter"/>
</dbReference>
<dbReference type="GO" id="GO:0090499">
    <property type="term" value="F:pimelyl-[acyl-carrier protein] methyl ester esterase activity"/>
    <property type="evidence" value="ECO:0007669"/>
    <property type="project" value="UniProtKB-EC"/>
</dbReference>
<dbReference type="GO" id="GO:0009102">
    <property type="term" value="P:biotin biosynthetic process"/>
    <property type="evidence" value="ECO:0007669"/>
    <property type="project" value="UniProtKB-UniRule"/>
</dbReference>
<dbReference type="Gene3D" id="3.40.50.1820">
    <property type="entry name" value="alpha/beta hydrolase"/>
    <property type="match status" value="1"/>
</dbReference>
<dbReference type="HAMAP" id="MF_01260">
    <property type="entry name" value="Carboxylester"/>
    <property type="match status" value="1"/>
</dbReference>
<dbReference type="InterPro" id="IPR000073">
    <property type="entry name" value="AB_hydrolase_1"/>
</dbReference>
<dbReference type="InterPro" id="IPR029058">
    <property type="entry name" value="AB_hydrolase_fold"/>
</dbReference>
<dbReference type="InterPro" id="IPR050266">
    <property type="entry name" value="AB_hydrolase_sf"/>
</dbReference>
<dbReference type="InterPro" id="IPR010076">
    <property type="entry name" value="BioH"/>
</dbReference>
<dbReference type="NCBIfam" id="TIGR01738">
    <property type="entry name" value="bioH"/>
    <property type="match status" value="1"/>
</dbReference>
<dbReference type="PANTHER" id="PTHR43798:SF31">
    <property type="entry name" value="AB HYDROLASE SUPERFAMILY PROTEIN YCLE"/>
    <property type="match status" value="1"/>
</dbReference>
<dbReference type="PANTHER" id="PTHR43798">
    <property type="entry name" value="MONOACYLGLYCEROL LIPASE"/>
    <property type="match status" value="1"/>
</dbReference>
<dbReference type="Pfam" id="PF00561">
    <property type="entry name" value="Abhydrolase_1"/>
    <property type="match status" value="1"/>
</dbReference>
<dbReference type="SUPFAM" id="SSF53474">
    <property type="entry name" value="alpha/beta-Hydrolases"/>
    <property type="match status" value="1"/>
</dbReference>
<comment type="function">
    <text evidence="2">The physiological role of BioH is to remove the methyl group introduced by BioC when the pimeloyl moiety is complete. It allows to synthesize pimeloyl-ACP via the fatty acid synthetic pathway through the hydrolysis of the ester bonds of pimeloyl-ACP esters.</text>
</comment>
<comment type="catalytic activity">
    <reaction evidence="2">
        <text>6-carboxyhexanoyl-[ACP] methyl ester + H2O = 6-carboxyhexanoyl-[ACP] + methanol + H(+)</text>
        <dbReference type="Rhea" id="RHEA:42700"/>
        <dbReference type="Rhea" id="RHEA-COMP:9955"/>
        <dbReference type="Rhea" id="RHEA-COMP:10186"/>
        <dbReference type="ChEBI" id="CHEBI:15377"/>
        <dbReference type="ChEBI" id="CHEBI:15378"/>
        <dbReference type="ChEBI" id="CHEBI:17790"/>
        <dbReference type="ChEBI" id="CHEBI:78846"/>
        <dbReference type="ChEBI" id="CHEBI:82735"/>
        <dbReference type="EC" id="3.1.1.85"/>
    </reaction>
</comment>
<comment type="pathway">
    <text evidence="2">Cofactor biosynthesis; biotin biosynthesis.</text>
</comment>
<comment type="subunit">
    <text evidence="2">Monomer.</text>
</comment>
<comment type="subcellular location">
    <subcellularLocation>
        <location evidence="2">Cytoplasm</location>
    </subcellularLocation>
</comment>
<comment type="similarity">
    <text evidence="2">Belongs to the AB hydrolase superfamily. Carboxylesterase BioH family.</text>
</comment>
<gene>
    <name evidence="2" type="primary">bioH</name>
    <name type="ordered locus">NT01EI_3652</name>
</gene>
<reference key="1">
    <citation type="submission" date="2009-03" db="EMBL/GenBank/DDBJ databases">
        <title>Complete genome sequence of Edwardsiella ictaluri 93-146.</title>
        <authorList>
            <person name="Williams M.L."/>
            <person name="Gillaspy A.F."/>
            <person name="Dyer D.W."/>
            <person name="Thune R.L."/>
            <person name="Waldbieser G.C."/>
            <person name="Schuster S.C."/>
            <person name="Gipson J."/>
            <person name="Zaitshik J."/>
            <person name="Landry C."/>
            <person name="Lawrence M.L."/>
        </authorList>
    </citation>
    <scope>NUCLEOTIDE SEQUENCE [LARGE SCALE GENOMIC DNA]</scope>
    <source>
        <strain>93-146</strain>
    </source>
</reference>
<proteinExistence type="inferred from homology"/>
<sequence>MSALFWHTCGAGKRDLVLLHGWGLNAEVWRSIVPQLSAQFRLHLVDLPGYGRSGGDTPYSLAEMTQRVLAQAPERALWLGWSLGGLVATQAALYHPQRVSGLITVASSPCFTAQMAWPGIRSDVLYHFQSQLRDDFQRTVERFLALQTLGADSARQDTRALKSVVLAQPMPSAAVLNAGLSLLRETDLRPQLATLALPWLRFYGALDGLVPRRVAPLVDALSPCGRSLIIPGAAHAPFISHPEPFCAALCEFADGRSV</sequence>